<name>MPK14_ORYSJ</name>
<dbReference type="EC" id="2.7.11.24"/>
<dbReference type="EMBL" id="AC104277">
    <property type="protein sequence ID" value="AAS98446.1"/>
    <property type="molecule type" value="Genomic_DNA"/>
</dbReference>
<dbReference type="EMBL" id="AC104283">
    <property type="protein sequence ID" value="AAU90196.1"/>
    <property type="molecule type" value="Genomic_DNA"/>
</dbReference>
<dbReference type="EMBL" id="AP014961">
    <property type="protein sequence ID" value="BAS92219.1"/>
    <property type="molecule type" value="Genomic_DNA"/>
</dbReference>
<dbReference type="EMBL" id="AK063944">
    <property type="status" value="NOT_ANNOTATED_CDS"/>
    <property type="molecule type" value="mRNA"/>
</dbReference>
<dbReference type="RefSeq" id="XP_015639438.1">
    <property type="nucleotide sequence ID" value="XM_015783952.1"/>
</dbReference>
<dbReference type="SMR" id="Q75KK8"/>
<dbReference type="FunCoup" id="Q75KK8">
    <property type="interactions" value="563"/>
</dbReference>
<dbReference type="STRING" id="39947.Q75KK8"/>
<dbReference type="PaxDb" id="39947-Q75KK8"/>
<dbReference type="EnsemblPlants" id="Os05t0143500-02">
    <property type="protein sequence ID" value="Os05t0143500-02"/>
    <property type="gene ID" value="Os05g0143500"/>
</dbReference>
<dbReference type="Gramene" id="Os05t0143500-02">
    <property type="protein sequence ID" value="Os05t0143500-02"/>
    <property type="gene ID" value="Os05g0143500"/>
</dbReference>
<dbReference type="eggNOG" id="KOG0660">
    <property type="taxonomic scope" value="Eukaryota"/>
</dbReference>
<dbReference type="HOGENOM" id="CLU_000288_181_5_1"/>
<dbReference type="InParanoid" id="Q75KK8"/>
<dbReference type="OMA" id="HQHSAYV"/>
<dbReference type="OrthoDB" id="2396at2759"/>
<dbReference type="Proteomes" id="UP000000763">
    <property type="component" value="Chromosome 5"/>
</dbReference>
<dbReference type="Proteomes" id="UP000059680">
    <property type="component" value="Chromosome 5"/>
</dbReference>
<dbReference type="ExpressionAtlas" id="Q75KK8">
    <property type="expression patterns" value="baseline and differential"/>
</dbReference>
<dbReference type="GO" id="GO:0005737">
    <property type="term" value="C:cytoplasm"/>
    <property type="evidence" value="ECO:0000318"/>
    <property type="project" value="GO_Central"/>
</dbReference>
<dbReference type="GO" id="GO:0005634">
    <property type="term" value="C:nucleus"/>
    <property type="evidence" value="ECO:0000318"/>
    <property type="project" value="GO_Central"/>
</dbReference>
<dbReference type="GO" id="GO:0005524">
    <property type="term" value="F:ATP binding"/>
    <property type="evidence" value="ECO:0007669"/>
    <property type="project" value="UniProtKB-KW"/>
</dbReference>
<dbReference type="GO" id="GO:0004707">
    <property type="term" value="F:MAP kinase activity"/>
    <property type="evidence" value="ECO:0007669"/>
    <property type="project" value="UniProtKB-EC"/>
</dbReference>
<dbReference type="GO" id="GO:0106310">
    <property type="term" value="F:protein serine kinase activity"/>
    <property type="evidence" value="ECO:0007669"/>
    <property type="project" value="RHEA"/>
</dbReference>
<dbReference type="GO" id="GO:0004674">
    <property type="term" value="F:protein serine/threonine kinase activity"/>
    <property type="evidence" value="ECO:0000318"/>
    <property type="project" value="GO_Central"/>
</dbReference>
<dbReference type="GO" id="GO:0035556">
    <property type="term" value="P:intracellular signal transduction"/>
    <property type="evidence" value="ECO:0000318"/>
    <property type="project" value="GO_Central"/>
</dbReference>
<dbReference type="CDD" id="cd07859">
    <property type="entry name" value="STKc_TDY_MAPK"/>
    <property type="match status" value="1"/>
</dbReference>
<dbReference type="FunFam" id="1.10.510.10:FF:000017">
    <property type="entry name" value="Mitogen-activated protein kinase"/>
    <property type="match status" value="1"/>
</dbReference>
<dbReference type="FunFam" id="3.30.200.20:FF:000046">
    <property type="entry name" value="Mitogen-activated protein kinase"/>
    <property type="match status" value="1"/>
</dbReference>
<dbReference type="Gene3D" id="3.30.200.20">
    <property type="entry name" value="Phosphorylase Kinase, domain 1"/>
    <property type="match status" value="1"/>
</dbReference>
<dbReference type="Gene3D" id="1.10.510.10">
    <property type="entry name" value="Transferase(Phosphotransferase) domain 1"/>
    <property type="match status" value="1"/>
</dbReference>
<dbReference type="InterPro" id="IPR011009">
    <property type="entry name" value="Kinase-like_dom_sf"/>
</dbReference>
<dbReference type="InterPro" id="IPR050117">
    <property type="entry name" value="MAP_kinase"/>
</dbReference>
<dbReference type="InterPro" id="IPR003527">
    <property type="entry name" value="MAP_kinase_CS"/>
</dbReference>
<dbReference type="InterPro" id="IPR000719">
    <property type="entry name" value="Prot_kinase_dom"/>
</dbReference>
<dbReference type="InterPro" id="IPR017441">
    <property type="entry name" value="Protein_kinase_ATP_BS"/>
</dbReference>
<dbReference type="PANTHER" id="PTHR24055">
    <property type="entry name" value="MITOGEN-ACTIVATED PROTEIN KINASE"/>
    <property type="match status" value="1"/>
</dbReference>
<dbReference type="Pfam" id="PF00069">
    <property type="entry name" value="Pkinase"/>
    <property type="match status" value="1"/>
</dbReference>
<dbReference type="SMART" id="SM00220">
    <property type="entry name" value="S_TKc"/>
    <property type="match status" value="1"/>
</dbReference>
<dbReference type="SUPFAM" id="SSF56112">
    <property type="entry name" value="Protein kinase-like (PK-like)"/>
    <property type="match status" value="1"/>
</dbReference>
<dbReference type="PROSITE" id="PS01351">
    <property type="entry name" value="MAPK"/>
    <property type="match status" value="1"/>
</dbReference>
<dbReference type="PROSITE" id="PS00107">
    <property type="entry name" value="PROTEIN_KINASE_ATP"/>
    <property type="match status" value="1"/>
</dbReference>
<dbReference type="PROSITE" id="PS50011">
    <property type="entry name" value="PROTEIN_KINASE_DOM"/>
    <property type="match status" value="1"/>
</dbReference>
<reference key="1">
    <citation type="journal article" date="2005" name="Mol. Genet. Genomics">
        <title>A fine physical map of the rice chromosome 5.</title>
        <authorList>
            <person name="Cheng C.-H."/>
            <person name="Chung M.C."/>
            <person name="Liu S.-M."/>
            <person name="Chen S.-K."/>
            <person name="Kao F.Y."/>
            <person name="Lin S.-J."/>
            <person name="Hsiao S.-H."/>
            <person name="Tseng I.C."/>
            <person name="Hsing Y.-I.C."/>
            <person name="Wu H.-P."/>
            <person name="Chen C.-S."/>
            <person name="Shaw J.-F."/>
            <person name="Wu J."/>
            <person name="Matsumoto T."/>
            <person name="Sasaki T."/>
            <person name="Chen H.-C."/>
            <person name="Chow T.-Y."/>
        </authorList>
    </citation>
    <scope>NUCLEOTIDE SEQUENCE [LARGE SCALE GENOMIC DNA]</scope>
    <source>
        <strain>cv. Nipponbare</strain>
    </source>
</reference>
<reference key="2">
    <citation type="journal article" date="2005" name="Nature">
        <title>The map-based sequence of the rice genome.</title>
        <authorList>
            <consortium name="International rice genome sequencing project (IRGSP)"/>
        </authorList>
    </citation>
    <scope>NUCLEOTIDE SEQUENCE [LARGE SCALE GENOMIC DNA]</scope>
    <source>
        <strain>cv. Nipponbare</strain>
    </source>
</reference>
<reference key="3">
    <citation type="journal article" date="2013" name="Rice">
        <title>Improvement of the Oryza sativa Nipponbare reference genome using next generation sequence and optical map data.</title>
        <authorList>
            <person name="Kawahara Y."/>
            <person name="de la Bastide M."/>
            <person name="Hamilton J.P."/>
            <person name="Kanamori H."/>
            <person name="McCombie W.R."/>
            <person name="Ouyang S."/>
            <person name="Schwartz D.C."/>
            <person name="Tanaka T."/>
            <person name="Wu J."/>
            <person name="Zhou S."/>
            <person name="Childs K.L."/>
            <person name="Davidson R.M."/>
            <person name="Lin H."/>
            <person name="Quesada-Ocampo L."/>
            <person name="Vaillancourt B."/>
            <person name="Sakai H."/>
            <person name="Lee S.S."/>
            <person name="Kim J."/>
            <person name="Numa H."/>
            <person name="Itoh T."/>
            <person name="Buell C.R."/>
            <person name="Matsumoto T."/>
        </authorList>
    </citation>
    <scope>GENOME REANNOTATION</scope>
    <source>
        <strain>cv. Nipponbare</strain>
    </source>
</reference>
<reference key="4">
    <citation type="journal article" date="2003" name="Science">
        <title>Collection, mapping, and annotation of over 28,000 cDNA clones from japonica rice.</title>
        <authorList>
            <consortium name="The rice full-length cDNA consortium"/>
        </authorList>
    </citation>
    <scope>NUCLEOTIDE SEQUENCE [LARGE SCALE MRNA]</scope>
    <source>
        <strain>cv. Nipponbare</strain>
    </source>
</reference>
<reference key="5">
    <citation type="journal article" date="2006" name="Mol. Plant Microbe Interact.">
        <title>Molecular analysis of the rice MAP kinase gene family in relation to Magnaporthe grisea infection.</title>
        <authorList>
            <person name="Reyna N.S."/>
            <person name="Yang Y."/>
        </authorList>
    </citation>
    <scope>NOMENCLATURE</scope>
</reference>
<sequence length="542" mass="61762">MDFFTEYGEGNRYKIEEVIGKGSYGVVCSALDTHTGDKVAIKKINDIFEHVSDATRILREIKLLRLLRHPDIVEIKHILLPPSRREFKDIYVVFELMESDLHQVIKANDDLTPEHYQFFLYQLLRGLKYIHTANVFHRDLKPKNILANADCKLKICDFGLARVAFSDTPTAIFWTDYIATRWYRAPELCGSFFSKYTPAIDIWSIGCIFAELLTGKPLFPGKNVVHQLDIITDLLGTPSPETISRIRNEKARRYLNSMRRKKPIPFTQKFPNADPLAMRLLERMLAFDPKDRPSAEEALADPYFKNIANVDREPSAQPITKLEFEFERRRITKEDIRELIYREILEYHPKMLREFLEGTESTGFMYPSAVDHFKKQFAYLEEHYAKGSTAAPPERQHNSLPRPCVVYSDNRPQSTASVTEDLSRCLIRDNNLKSQDSASVGASRIPQGAAARPGKAVGSVLRYGNCSTSAAEQQYEQRRVVRNPAIAPNSSVPLGSSYPRRNQTCKSETGDVERIDSSQTGPPKPYVANKLPATVDGRSGHW</sequence>
<proteinExistence type="evidence at transcript level"/>
<gene>
    <name type="primary">MPK14</name>
    <name type="ordered locus">Os05g0143500</name>
    <name type="ordered locus">LOC_Os05g05160</name>
    <name type="ORF">OJ1264_A04.20</name>
    <name type="ORF">OJ1607_F09.3</name>
</gene>
<keyword id="KW-0067">ATP-binding</keyword>
<keyword id="KW-0418">Kinase</keyword>
<keyword id="KW-0547">Nucleotide-binding</keyword>
<keyword id="KW-0597">Phosphoprotein</keyword>
<keyword id="KW-1185">Reference proteome</keyword>
<keyword id="KW-0723">Serine/threonine-protein kinase</keyword>
<keyword id="KW-0808">Transferase</keyword>
<protein>
    <recommendedName>
        <fullName>Mitogen-activated protein kinase 14</fullName>
        <shortName>MAP kinase 14</shortName>
        <ecNumber>2.7.11.24</ecNumber>
    </recommendedName>
</protein>
<evidence type="ECO:0000250" key="1"/>
<evidence type="ECO:0000255" key="2">
    <source>
        <dbReference type="PROSITE-ProRule" id="PRU00159"/>
    </source>
</evidence>
<evidence type="ECO:0000256" key="3">
    <source>
        <dbReference type="SAM" id="MobiDB-lite"/>
    </source>
</evidence>
<evidence type="ECO:0000305" key="4"/>
<comment type="catalytic activity">
    <reaction>
        <text>L-seryl-[protein] + ATP = O-phospho-L-seryl-[protein] + ADP + H(+)</text>
        <dbReference type="Rhea" id="RHEA:17989"/>
        <dbReference type="Rhea" id="RHEA-COMP:9863"/>
        <dbReference type="Rhea" id="RHEA-COMP:11604"/>
        <dbReference type="ChEBI" id="CHEBI:15378"/>
        <dbReference type="ChEBI" id="CHEBI:29999"/>
        <dbReference type="ChEBI" id="CHEBI:30616"/>
        <dbReference type="ChEBI" id="CHEBI:83421"/>
        <dbReference type="ChEBI" id="CHEBI:456216"/>
        <dbReference type="EC" id="2.7.11.24"/>
    </reaction>
</comment>
<comment type="catalytic activity">
    <reaction>
        <text>L-threonyl-[protein] + ATP = O-phospho-L-threonyl-[protein] + ADP + H(+)</text>
        <dbReference type="Rhea" id="RHEA:46608"/>
        <dbReference type="Rhea" id="RHEA-COMP:11060"/>
        <dbReference type="Rhea" id="RHEA-COMP:11605"/>
        <dbReference type="ChEBI" id="CHEBI:15378"/>
        <dbReference type="ChEBI" id="CHEBI:30013"/>
        <dbReference type="ChEBI" id="CHEBI:30616"/>
        <dbReference type="ChEBI" id="CHEBI:61977"/>
        <dbReference type="ChEBI" id="CHEBI:456216"/>
        <dbReference type="EC" id="2.7.11.24"/>
    </reaction>
</comment>
<comment type="activity regulation">
    <text evidence="1">Activated by threonine and tyrosine phosphorylation.</text>
</comment>
<comment type="domain">
    <text>The TXY motif contains the threonine and tyrosine residues whose phosphorylation activates the MAP kinases.</text>
</comment>
<comment type="PTM">
    <text evidence="1">Dually phosphorylated on Thr-175 and Tyr-177, which activates the enzyme.</text>
</comment>
<comment type="similarity">
    <text evidence="4">Belongs to the protein kinase superfamily. CMGC Ser/Thr protein kinase family. MAP kinase subfamily.</text>
</comment>
<organism>
    <name type="scientific">Oryza sativa subsp. japonica</name>
    <name type="common">Rice</name>
    <dbReference type="NCBI Taxonomy" id="39947"/>
    <lineage>
        <taxon>Eukaryota</taxon>
        <taxon>Viridiplantae</taxon>
        <taxon>Streptophyta</taxon>
        <taxon>Embryophyta</taxon>
        <taxon>Tracheophyta</taxon>
        <taxon>Spermatophyta</taxon>
        <taxon>Magnoliopsida</taxon>
        <taxon>Liliopsida</taxon>
        <taxon>Poales</taxon>
        <taxon>Poaceae</taxon>
        <taxon>BOP clade</taxon>
        <taxon>Oryzoideae</taxon>
        <taxon>Oryzeae</taxon>
        <taxon>Oryzinae</taxon>
        <taxon>Oryza</taxon>
        <taxon>Oryza sativa</taxon>
    </lineage>
</organism>
<accession>Q75KK8</accession>
<feature type="chain" id="PRO_0000239757" description="Mitogen-activated protein kinase 14">
    <location>
        <begin position="1"/>
        <end position="542"/>
    </location>
</feature>
<feature type="domain" description="Protein kinase" evidence="2">
    <location>
        <begin position="13"/>
        <end position="304"/>
    </location>
</feature>
<feature type="region of interest" description="Disordered" evidence="3">
    <location>
        <begin position="388"/>
        <end position="412"/>
    </location>
</feature>
<feature type="region of interest" description="Disordered" evidence="3">
    <location>
        <begin position="482"/>
        <end position="542"/>
    </location>
</feature>
<feature type="short sequence motif" description="TXY">
    <location>
        <begin position="175"/>
        <end position="177"/>
    </location>
</feature>
<feature type="compositionally biased region" description="Polar residues" evidence="3">
    <location>
        <begin position="488"/>
        <end position="507"/>
    </location>
</feature>
<feature type="active site" description="Proton acceptor" evidence="2">
    <location>
        <position position="139"/>
    </location>
</feature>
<feature type="binding site" evidence="2">
    <location>
        <begin position="19"/>
        <end position="27"/>
    </location>
    <ligand>
        <name>ATP</name>
        <dbReference type="ChEBI" id="CHEBI:30616"/>
    </ligand>
</feature>
<feature type="binding site" evidence="2">
    <location>
        <position position="42"/>
    </location>
    <ligand>
        <name>ATP</name>
        <dbReference type="ChEBI" id="CHEBI:30616"/>
    </ligand>
</feature>
<feature type="modified residue" description="Phosphothreonine" evidence="1">
    <location>
        <position position="175"/>
    </location>
</feature>
<feature type="modified residue" description="Phosphotyrosine" evidence="1">
    <location>
        <position position="177"/>
    </location>
</feature>